<evidence type="ECO:0000255" key="1">
    <source>
        <dbReference type="HAMAP-Rule" id="MF_03117"/>
    </source>
</evidence>
<gene>
    <name evidence="1" type="primary">UTR4</name>
    <name type="ordered locus">PAS_chr2-2_0446</name>
</gene>
<feature type="chain" id="PRO_0000394007" description="Enolase-phosphatase E1">
    <location>
        <begin position="1"/>
        <end position="235"/>
    </location>
</feature>
<feature type="binding site" evidence="1">
    <location>
        <position position="10"/>
    </location>
    <ligand>
        <name>Mg(2+)</name>
        <dbReference type="ChEBI" id="CHEBI:18420"/>
    </ligand>
</feature>
<feature type="binding site" evidence="1">
    <location>
        <position position="12"/>
    </location>
    <ligand>
        <name>Mg(2+)</name>
        <dbReference type="ChEBI" id="CHEBI:18420"/>
    </ligand>
</feature>
<feature type="binding site" evidence="1">
    <location>
        <begin position="130"/>
        <end position="131"/>
    </location>
    <ligand>
        <name>substrate</name>
    </ligand>
</feature>
<feature type="binding site" evidence="1">
    <location>
        <position position="169"/>
    </location>
    <ligand>
        <name>substrate</name>
    </ligand>
</feature>
<feature type="binding site" evidence="1">
    <location>
        <position position="194"/>
    </location>
    <ligand>
        <name>Mg(2+)</name>
        <dbReference type="ChEBI" id="CHEBI:18420"/>
    </ligand>
</feature>
<organism>
    <name type="scientific">Komagataella phaffii (strain GS115 / ATCC 20864)</name>
    <name type="common">Yeast</name>
    <name type="synonym">Pichia pastoris</name>
    <dbReference type="NCBI Taxonomy" id="644223"/>
    <lineage>
        <taxon>Eukaryota</taxon>
        <taxon>Fungi</taxon>
        <taxon>Dikarya</taxon>
        <taxon>Ascomycota</taxon>
        <taxon>Saccharomycotina</taxon>
        <taxon>Pichiomycetes</taxon>
        <taxon>Pichiales</taxon>
        <taxon>Pichiaceae</taxon>
        <taxon>Komagataella</taxon>
    </lineage>
</organism>
<keyword id="KW-0028">Amino-acid biosynthesis</keyword>
<keyword id="KW-0963">Cytoplasm</keyword>
<keyword id="KW-0378">Hydrolase</keyword>
<keyword id="KW-0460">Magnesium</keyword>
<keyword id="KW-0479">Metal-binding</keyword>
<keyword id="KW-0486">Methionine biosynthesis</keyword>
<keyword id="KW-0539">Nucleus</keyword>
<keyword id="KW-1185">Reference proteome</keyword>
<comment type="function">
    <text evidence="1">Bifunctional enzyme that catalyzes the enolization of 2,3-diketo-5-methylthiopentyl-1-phosphate (DK-MTP-1-P) into the intermediate 2-hydroxy-3-keto-5-methylthiopentenyl-1-phosphate (HK-MTPenyl-1-P), which is then dephosphorylated to form the acireductone 1,2-dihydroxy-3-keto-5-methylthiopentene (DHK-MTPene).</text>
</comment>
<comment type="catalytic activity">
    <reaction evidence="1">
        <text>5-methylsulfanyl-2,3-dioxopentyl phosphate + H2O = 1,2-dihydroxy-5-(methylsulfanyl)pent-1-en-3-one + phosphate</text>
        <dbReference type="Rhea" id="RHEA:21700"/>
        <dbReference type="ChEBI" id="CHEBI:15377"/>
        <dbReference type="ChEBI" id="CHEBI:43474"/>
        <dbReference type="ChEBI" id="CHEBI:49252"/>
        <dbReference type="ChEBI" id="CHEBI:58828"/>
        <dbReference type="EC" id="3.1.3.77"/>
    </reaction>
</comment>
<comment type="cofactor">
    <cofactor evidence="1">
        <name>Mg(2+)</name>
        <dbReference type="ChEBI" id="CHEBI:18420"/>
    </cofactor>
    <text evidence="1">Binds 1 Mg(2+) ion per subunit.</text>
</comment>
<comment type="pathway">
    <text evidence="1">Amino-acid biosynthesis; L-methionine biosynthesis via salvage pathway; L-methionine from S-methyl-5-thio-alpha-D-ribose 1-phosphate: step 3/6.</text>
</comment>
<comment type="pathway">
    <text evidence="1">Amino-acid biosynthesis; L-methionine biosynthesis via salvage pathway; L-methionine from S-methyl-5-thio-alpha-D-ribose 1-phosphate: step 4/6.</text>
</comment>
<comment type="subunit">
    <text evidence="1">Monomer.</text>
</comment>
<comment type="subcellular location">
    <subcellularLocation>
        <location evidence="1">Cytoplasm</location>
    </subcellularLocation>
    <subcellularLocation>
        <location evidence="1">Nucleus</location>
    </subcellularLocation>
</comment>
<comment type="similarity">
    <text evidence="1">Belongs to the HAD-like hydrolase superfamily. MasA/MtnC family.</text>
</comment>
<accession>C4R1T9</accession>
<proteinExistence type="inferred from homology"/>
<dbReference type="EC" id="3.1.3.77" evidence="1"/>
<dbReference type="EMBL" id="FN392320">
    <property type="protein sequence ID" value="CAY69463.1"/>
    <property type="molecule type" value="Genomic_DNA"/>
</dbReference>
<dbReference type="RefSeq" id="XP_002491743.1">
    <property type="nucleotide sequence ID" value="XM_002491698.1"/>
</dbReference>
<dbReference type="SMR" id="C4R1T9"/>
<dbReference type="FunCoup" id="C4R1T9">
    <property type="interactions" value="649"/>
</dbReference>
<dbReference type="STRING" id="644223.C4R1T9"/>
<dbReference type="EnsemblFungi" id="CAY69463">
    <property type="protein sequence ID" value="CAY69463"/>
    <property type="gene ID" value="PAS_chr2-2_0446"/>
</dbReference>
<dbReference type="GeneID" id="8198081"/>
<dbReference type="KEGG" id="ppa:PAS_chr2-2_0446"/>
<dbReference type="eggNOG" id="KOG2630">
    <property type="taxonomic scope" value="Eukaryota"/>
</dbReference>
<dbReference type="HOGENOM" id="CLU_023273_1_1_1"/>
<dbReference type="InParanoid" id="C4R1T9"/>
<dbReference type="OMA" id="LQGMVWE"/>
<dbReference type="OrthoDB" id="272500at2759"/>
<dbReference type="UniPathway" id="UPA00904">
    <property type="reaction ID" value="UER00876"/>
</dbReference>
<dbReference type="UniPathway" id="UPA00904">
    <property type="reaction ID" value="UER00877"/>
</dbReference>
<dbReference type="Proteomes" id="UP000000314">
    <property type="component" value="Chromosome 2"/>
</dbReference>
<dbReference type="GO" id="GO:0005737">
    <property type="term" value="C:cytoplasm"/>
    <property type="evidence" value="ECO:0007669"/>
    <property type="project" value="UniProtKB-SubCell"/>
</dbReference>
<dbReference type="GO" id="GO:0005634">
    <property type="term" value="C:nucleus"/>
    <property type="evidence" value="ECO:0007669"/>
    <property type="project" value="UniProtKB-SubCell"/>
</dbReference>
<dbReference type="GO" id="GO:0043874">
    <property type="term" value="F:acireductone synthase activity"/>
    <property type="evidence" value="ECO:0007669"/>
    <property type="project" value="UniProtKB-EC"/>
</dbReference>
<dbReference type="GO" id="GO:0000287">
    <property type="term" value="F:magnesium ion binding"/>
    <property type="evidence" value="ECO:0007669"/>
    <property type="project" value="UniProtKB-UniRule"/>
</dbReference>
<dbReference type="GO" id="GO:0019509">
    <property type="term" value="P:L-methionine salvage from methylthioadenosine"/>
    <property type="evidence" value="ECO:0007669"/>
    <property type="project" value="UniProtKB-UniRule"/>
</dbReference>
<dbReference type="CDD" id="cd01629">
    <property type="entry name" value="HAD_EP"/>
    <property type="match status" value="1"/>
</dbReference>
<dbReference type="Gene3D" id="1.10.720.60">
    <property type="match status" value="1"/>
</dbReference>
<dbReference type="Gene3D" id="3.40.50.1000">
    <property type="entry name" value="HAD superfamily/HAD-like"/>
    <property type="match status" value="1"/>
</dbReference>
<dbReference type="HAMAP" id="MF_03117">
    <property type="entry name" value="Salvage_MtnC_euk"/>
    <property type="match status" value="1"/>
</dbReference>
<dbReference type="InterPro" id="IPR023943">
    <property type="entry name" value="Enolase-ppase_E1"/>
</dbReference>
<dbReference type="InterPro" id="IPR027511">
    <property type="entry name" value="ENOPH1_eukaryotes"/>
</dbReference>
<dbReference type="InterPro" id="IPR036412">
    <property type="entry name" value="HAD-like_sf"/>
</dbReference>
<dbReference type="InterPro" id="IPR023214">
    <property type="entry name" value="HAD_sf"/>
</dbReference>
<dbReference type="NCBIfam" id="TIGR01691">
    <property type="entry name" value="enolase-ppase"/>
    <property type="match status" value="1"/>
</dbReference>
<dbReference type="PANTHER" id="PTHR20371">
    <property type="entry name" value="ENOLASE-PHOSPHATASE E1"/>
    <property type="match status" value="1"/>
</dbReference>
<dbReference type="PANTHER" id="PTHR20371:SF1">
    <property type="entry name" value="ENOLASE-PHOSPHATASE E1"/>
    <property type="match status" value="1"/>
</dbReference>
<dbReference type="Pfam" id="PF00702">
    <property type="entry name" value="Hydrolase"/>
    <property type="match status" value="1"/>
</dbReference>
<dbReference type="SFLD" id="SFLDG01133">
    <property type="entry name" value="C1.5.4:_Enolase-phosphatase_Li"/>
    <property type="match status" value="1"/>
</dbReference>
<dbReference type="SFLD" id="SFLDS00003">
    <property type="entry name" value="Haloacid_Dehalogenase"/>
    <property type="match status" value="1"/>
</dbReference>
<dbReference type="SUPFAM" id="SSF56784">
    <property type="entry name" value="HAD-like"/>
    <property type="match status" value="1"/>
</dbReference>
<name>ENOPH_KOMPG</name>
<reference key="1">
    <citation type="journal article" date="2009" name="Nat. Biotechnol.">
        <title>Genome sequence of the recombinant protein production host Pichia pastoris.</title>
        <authorList>
            <person name="De Schutter K."/>
            <person name="Lin Y.-C."/>
            <person name="Tiels P."/>
            <person name="Van Hecke A."/>
            <person name="Glinka S."/>
            <person name="Weber-Lehmann J."/>
            <person name="Rouze P."/>
            <person name="Van de Peer Y."/>
            <person name="Callewaert N."/>
        </authorList>
    </citation>
    <scope>NUCLEOTIDE SEQUENCE [LARGE SCALE GENOMIC DNA]</scope>
    <source>
        <strain>GS115 / ATCC 20864</strain>
    </source>
</reference>
<sequence>MAVYDTIILDIEGTVCSISFVKNVLFPYFLDKLPFLLEQVEFPLDHTDNVTVTQILAKFPERYTKSKECLKTYINELVANDIKDPTLKQLQGIVWQAGYEEGEIVVDLYNDVIEALDRWKKEDKSVYIYSSGSIKAQKLLFSHVKFKSETRDLTNYIKGYYDPTSVGSKIESESYLNILKDLNKDPESAIFLSDNIKEVAASIRAGIKSLVVKRPGNTVHHDNQSFDFVYSFDNV</sequence>
<protein>
    <recommendedName>
        <fullName evidence="1">Enolase-phosphatase E1</fullName>
        <ecNumber evidence="1">3.1.3.77</ecNumber>
    </recommendedName>
    <alternativeName>
        <fullName evidence="1">2,3-diketo-5-methylthio-1-phosphopentane phosphatase</fullName>
    </alternativeName>
</protein>